<accession>A1WY04</accession>
<proteinExistence type="inferred from homology"/>
<reference key="1">
    <citation type="submission" date="2006-12" db="EMBL/GenBank/DDBJ databases">
        <title>Complete sequence of Halorhodospira halophila SL1.</title>
        <authorList>
            <consortium name="US DOE Joint Genome Institute"/>
            <person name="Copeland A."/>
            <person name="Lucas S."/>
            <person name="Lapidus A."/>
            <person name="Barry K."/>
            <person name="Detter J.C."/>
            <person name="Glavina del Rio T."/>
            <person name="Hammon N."/>
            <person name="Israni S."/>
            <person name="Dalin E."/>
            <person name="Tice H."/>
            <person name="Pitluck S."/>
            <person name="Saunders E."/>
            <person name="Brettin T."/>
            <person name="Bruce D."/>
            <person name="Han C."/>
            <person name="Tapia R."/>
            <person name="Schmutz J."/>
            <person name="Larimer F."/>
            <person name="Land M."/>
            <person name="Hauser L."/>
            <person name="Kyrpides N."/>
            <person name="Mikhailova N."/>
            <person name="Hoff W."/>
            <person name="Richardson P."/>
        </authorList>
    </citation>
    <scope>NUCLEOTIDE SEQUENCE [LARGE SCALE GENOMIC DNA]</scope>
    <source>
        <strain>DSM 244 / SL1</strain>
    </source>
</reference>
<name>ACCD_HALHL</name>
<keyword id="KW-0067">ATP-binding</keyword>
<keyword id="KW-0963">Cytoplasm</keyword>
<keyword id="KW-0275">Fatty acid biosynthesis</keyword>
<keyword id="KW-0276">Fatty acid metabolism</keyword>
<keyword id="KW-0444">Lipid biosynthesis</keyword>
<keyword id="KW-0443">Lipid metabolism</keyword>
<keyword id="KW-0479">Metal-binding</keyword>
<keyword id="KW-0547">Nucleotide-binding</keyword>
<keyword id="KW-1185">Reference proteome</keyword>
<keyword id="KW-0808">Transferase</keyword>
<keyword id="KW-0862">Zinc</keyword>
<keyword id="KW-0863">Zinc-finger</keyword>
<comment type="function">
    <text evidence="1">Component of the acetyl coenzyme A carboxylase (ACC) complex. Biotin carboxylase (BC) catalyzes the carboxylation of biotin on its carrier protein (BCCP) and then the CO(2) group is transferred by the transcarboxylase to acetyl-CoA to form malonyl-CoA.</text>
</comment>
<comment type="catalytic activity">
    <reaction evidence="1">
        <text>N(6)-carboxybiotinyl-L-lysyl-[protein] + acetyl-CoA = N(6)-biotinyl-L-lysyl-[protein] + malonyl-CoA</text>
        <dbReference type="Rhea" id="RHEA:54728"/>
        <dbReference type="Rhea" id="RHEA-COMP:10505"/>
        <dbReference type="Rhea" id="RHEA-COMP:10506"/>
        <dbReference type="ChEBI" id="CHEBI:57288"/>
        <dbReference type="ChEBI" id="CHEBI:57384"/>
        <dbReference type="ChEBI" id="CHEBI:83144"/>
        <dbReference type="ChEBI" id="CHEBI:83145"/>
        <dbReference type="EC" id="2.1.3.15"/>
    </reaction>
</comment>
<comment type="cofactor">
    <cofactor evidence="1">
        <name>Zn(2+)</name>
        <dbReference type="ChEBI" id="CHEBI:29105"/>
    </cofactor>
    <text evidence="1">Binds 1 zinc ion per subunit.</text>
</comment>
<comment type="pathway">
    <text evidence="1">Lipid metabolism; malonyl-CoA biosynthesis; malonyl-CoA from acetyl-CoA: step 1/1.</text>
</comment>
<comment type="subunit">
    <text evidence="1">Acetyl-CoA carboxylase is a heterohexamer composed of biotin carboxyl carrier protein (AccB), biotin carboxylase (AccC) and two subunits each of ACCase subunit alpha (AccA) and ACCase subunit beta (AccD).</text>
</comment>
<comment type="subcellular location">
    <subcellularLocation>
        <location evidence="1">Cytoplasm</location>
    </subcellularLocation>
</comment>
<comment type="similarity">
    <text evidence="1">Belongs to the AccD/PCCB family.</text>
</comment>
<feature type="chain" id="PRO_0000359003" description="Acetyl-coenzyme A carboxylase carboxyl transferase subunit beta">
    <location>
        <begin position="1"/>
        <end position="336"/>
    </location>
</feature>
<feature type="domain" description="CoA carboxyltransferase N-terminal" evidence="2">
    <location>
        <begin position="27"/>
        <end position="297"/>
    </location>
</feature>
<feature type="zinc finger region" description="C4-type" evidence="1">
    <location>
        <begin position="31"/>
        <end position="53"/>
    </location>
</feature>
<feature type="region of interest" description="Disordered" evidence="3">
    <location>
        <begin position="287"/>
        <end position="336"/>
    </location>
</feature>
<feature type="compositionally biased region" description="Acidic residues" evidence="3">
    <location>
        <begin position="300"/>
        <end position="311"/>
    </location>
</feature>
<feature type="compositionally biased region" description="Low complexity" evidence="3">
    <location>
        <begin position="312"/>
        <end position="326"/>
    </location>
</feature>
<feature type="binding site" evidence="1">
    <location>
        <position position="31"/>
    </location>
    <ligand>
        <name>Zn(2+)</name>
        <dbReference type="ChEBI" id="CHEBI:29105"/>
    </ligand>
</feature>
<feature type="binding site" evidence="1">
    <location>
        <position position="34"/>
    </location>
    <ligand>
        <name>Zn(2+)</name>
        <dbReference type="ChEBI" id="CHEBI:29105"/>
    </ligand>
</feature>
<feature type="binding site" evidence="1">
    <location>
        <position position="50"/>
    </location>
    <ligand>
        <name>Zn(2+)</name>
        <dbReference type="ChEBI" id="CHEBI:29105"/>
    </ligand>
</feature>
<feature type="binding site" evidence="1">
    <location>
        <position position="53"/>
    </location>
    <ligand>
        <name>Zn(2+)</name>
        <dbReference type="ChEBI" id="CHEBI:29105"/>
    </ligand>
</feature>
<protein>
    <recommendedName>
        <fullName evidence="1">Acetyl-coenzyme A carboxylase carboxyl transferase subunit beta</fullName>
        <shortName evidence="1">ACCase subunit beta</shortName>
        <shortName evidence="1">Acetyl-CoA carboxylase carboxyltransferase subunit beta</shortName>
        <ecNumber evidence="1">2.1.3.15</ecNumber>
    </recommendedName>
</protein>
<gene>
    <name evidence="1" type="primary">accD</name>
    <name type="ordered locus">Hhal_1802</name>
</gene>
<organism>
    <name type="scientific">Halorhodospira halophila (strain DSM 244 / SL1)</name>
    <name type="common">Ectothiorhodospira halophila (strain DSM 244 / SL1)</name>
    <dbReference type="NCBI Taxonomy" id="349124"/>
    <lineage>
        <taxon>Bacteria</taxon>
        <taxon>Pseudomonadati</taxon>
        <taxon>Pseudomonadota</taxon>
        <taxon>Gammaproteobacteria</taxon>
        <taxon>Chromatiales</taxon>
        <taxon>Ectothiorhodospiraceae</taxon>
        <taxon>Halorhodospira</taxon>
    </lineage>
</organism>
<dbReference type="EC" id="2.1.3.15" evidence="1"/>
<dbReference type="EMBL" id="CP000544">
    <property type="protein sequence ID" value="ABM62566.1"/>
    <property type="molecule type" value="Genomic_DNA"/>
</dbReference>
<dbReference type="RefSeq" id="WP_011814588.1">
    <property type="nucleotide sequence ID" value="NC_008789.1"/>
</dbReference>
<dbReference type="SMR" id="A1WY04"/>
<dbReference type="STRING" id="349124.Hhal_1802"/>
<dbReference type="KEGG" id="hha:Hhal_1802"/>
<dbReference type="eggNOG" id="COG0777">
    <property type="taxonomic scope" value="Bacteria"/>
</dbReference>
<dbReference type="HOGENOM" id="CLU_015486_1_0_6"/>
<dbReference type="OrthoDB" id="9772975at2"/>
<dbReference type="UniPathway" id="UPA00655">
    <property type="reaction ID" value="UER00711"/>
</dbReference>
<dbReference type="Proteomes" id="UP000000647">
    <property type="component" value="Chromosome"/>
</dbReference>
<dbReference type="GO" id="GO:0009329">
    <property type="term" value="C:acetate CoA-transferase complex"/>
    <property type="evidence" value="ECO:0007669"/>
    <property type="project" value="TreeGrafter"/>
</dbReference>
<dbReference type="GO" id="GO:0003989">
    <property type="term" value="F:acetyl-CoA carboxylase activity"/>
    <property type="evidence" value="ECO:0007669"/>
    <property type="project" value="InterPro"/>
</dbReference>
<dbReference type="GO" id="GO:0005524">
    <property type="term" value="F:ATP binding"/>
    <property type="evidence" value="ECO:0007669"/>
    <property type="project" value="UniProtKB-KW"/>
</dbReference>
<dbReference type="GO" id="GO:0016743">
    <property type="term" value="F:carboxyl- or carbamoyltransferase activity"/>
    <property type="evidence" value="ECO:0007669"/>
    <property type="project" value="UniProtKB-UniRule"/>
</dbReference>
<dbReference type="GO" id="GO:0008270">
    <property type="term" value="F:zinc ion binding"/>
    <property type="evidence" value="ECO:0007669"/>
    <property type="project" value="UniProtKB-UniRule"/>
</dbReference>
<dbReference type="GO" id="GO:0006633">
    <property type="term" value="P:fatty acid biosynthetic process"/>
    <property type="evidence" value="ECO:0007669"/>
    <property type="project" value="UniProtKB-KW"/>
</dbReference>
<dbReference type="GO" id="GO:2001295">
    <property type="term" value="P:malonyl-CoA biosynthetic process"/>
    <property type="evidence" value="ECO:0007669"/>
    <property type="project" value="UniProtKB-UniRule"/>
</dbReference>
<dbReference type="Gene3D" id="3.90.226.10">
    <property type="entry name" value="2-enoyl-CoA Hydratase, Chain A, domain 1"/>
    <property type="match status" value="1"/>
</dbReference>
<dbReference type="HAMAP" id="MF_01395">
    <property type="entry name" value="AcetylCoA_CT_beta"/>
    <property type="match status" value="1"/>
</dbReference>
<dbReference type="InterPro" id="IPR034733">
    <property type="entry name" value="AcCoA_carboxyl_beta"/>
</dbReference>
<dbReference type="InterPro" id="IPR000438">
    <property type="entry name" value="Acetyl_CoA_COase_Trfase_b_su"/>
</dbReference>
<dbReference type="InterPro" id="IPR029045">
    <property type="entry name" value="ClpP/crotonase-like_dom_sf"/>
</dbReference>
<dbReference type="InterPro" id="IPR011762">
    <property type="entry name" value="COA_CT_N"/>
</dbReference>
<dbReference type="InterPro" id="IPR041010">
    <property type="entry name" value="Znf-ACC"/>
</dbReference>
<dbReference type="NCBIfam" id="TIGR00515">
    <property type="entry name" value="accD"/>
    <property type="match status" value="1"/>
</dbReference>
<dbReference type="PANTHER" id="PTHR42995">
    <property type="entry name" value="ACETYL-COENZYME A CARBOXYLASE CARBOXYL TRANSFERASE SUBUNIT BETA, CHLOROPLASTIC"/>
    <property type="match status" value="1"/>
</dbReference>
<dbReference type="PANTHER" id="PTHR42995:SF5">
    <property type="entry name" value="ACETYL-COENZYME A CARBOXYLASE CARBOXYL TRANSFERASE SUBUNIT BETA, CHLOROPLASTIC"/>
    <property type="match status" value="1"/>
</dbReference>
<dbReference type="Pfam" id="PF01039">
    <property type="entry name" value="Carboxyl_trans"/>
    <property type="match status" value="1"/>
</dbReference>
<dbReference type="Pfam" id="PF17848">
    <property type="entry name" value="Zn_ribbon_ACC"/>
    <property type="match status" value="1"/>
</dbReference>
<dbReference type="PRINTS" id="PR01070">
    <property type="entry name" value="ACCCTRFRASEB"/>
</dbReference>
<dbReference type="SUPFAM" id="SSF52096">
    <property type="entry name" value="ClpP/crotonase"/>
    <property type="match status" value="1"/>
</dbReference>
<dbReference type="PROSITE" id="PS50980">
    <property type="entry name" value="COA_CT_NTER"/>
    <property type="match status" value="1"/>
</dbReference>
<evidence type="ECO:0000255" key="1">
    <source>
        <dbReference type="HAMAP-Rule" id="MF_01395"/>
    </source>
</evidence>
<evidence type="ECO:0000255" key="2">
    <source>
        <dbReference type="PROSITE-ProRule" id="PRU01136"/>
    </source>
</evidence>
<evidence type="ECO:0000256" key="3">
    <source>
        <dbReference type="SAM" id="MobiDB-lite"/>
    </source>
</evidence>
<sequence length="336" mass="36296">MSWFQKLMPRRIRTDAGPRSRSVPEGLWTKCESCQGILYRPDLERNLEVCPKCGAHMRISARQRLRLFLDESCEAVEIGAELQPSDFLRFRDSKRYRDRLNQAQKATGENDALVAMRGAVHQRPVVVCAFEFGFMGGSMGTIVGERFCRAAEEARANDIPLVCFSASGGARMQEALFSLMQMAKTSAAISRLNEARVPYISVLTDPTMGGVSASLATLGDVIIAEPGALIGFAGPRVIEQTVRETLPEGFQRAEFLLDHGAIDMIVDRRDMRDEIASLMGKLGGDVSVAPAPAPAATVDPEPESAEPEAPAEEAGPAGAAGDQAGESQDEGDPRNA</sequence>